<keyword id="KW-0175">Coiled coil</keyword>
<keyword id="KW-0963">Cytoplasm</keyword>
<keyword id="KW-0403">Intermediate filament</keyword>
<keyword id="KW-0416">Keratin</keyword>
<keyword id="KW-1185">Reference proteome</keyword>
<organism>
    <name type="scientific">Bos taurus</name>
    <name type="common">Bovine</name>
    <dbReference type="NCBI Taxonomy" id="9913"/>
    <lineage>
        <taxon>Eukaryota</taxon>
        <taxon>Metazoa</taxon>
        <taxon>Chordata</taxon>
        <taxon>Craniata</taxon>
        <taxon>Vertebrata</taxon>
        <taxon>Euteleostomi</taxon>
        <taxon>Mammalia</taxon>
        <taxon>Eutheria</taxon>
        <taxon>Laurasiatheria</taxon>
        <taxon>Artiodactyla</taxon>
        <taxon>Ruminantia</taxon>
        <taxon>Pecora</taxon>
        <taxon>Bovidae</taxon>
        <taxon>Bovinae</taxon>
        <taxon>Bos</taxon>
    </lineage>
</organism>
<comment type="function">
    <text evidence="2">Essential for the proper assembly of type I and type II keratin protein complexes and formation of keratin intermediate filaments in the inner root sheath (irs).</text>
</comment>
<comment type="subunit">
    <text evidence="2 6">Heterotetramer of two type I and two type II keratins. Interacts with KRT6A to form filaments (By similarity).</text>
</comment>
<comment type="subcellular location">
    <subcellularLocation>
        <location evidence="2">Cytoplasm</location>
    </subcellularLocation>
</comment>
<comment type="miscellaneous">
    <text evidence="6">There are two types of cytoskeletal and microfibrillar keratin: I (acidic; 40-55 kDa) and II (neutral to basic; 56-70 kDa).</text>
</comment>
<comment type="similarity">
    <text evidence="4">Belongs to the intermediate filament family.</text>
</comment>
<gene>
    <name evidence="1" type="primary">KRT27</name>
</gene>
<accession>Q0P5J6</accession>
<evidence type="ECO:0000250" key="1">
    <source>
        <dbReference type="UniProtKB" id="Q7Z3Y8"/>
    </source>
</evidence>
<evidence type="ECO:0000250" key="2">
    <source>
        <dbReference type="UniProtKB" id="Q9Z320"/>
    </source>
</evidence>
<evidence type="ECO:0000255" key="3"/>
<evidence type="ECO:0000255" key="4">
    <source>
        <dbReference type="PROSITE-ProRule" id="PRU01188"/>
    </source>
</evidence>
<evidence type="ECO:0000256" key="5">
    <source>
        <dbReference type="SAM" id="MobiDB-lite"/>
    </source>
</evidence>
<evidence type="ECO:0000305" key="6"/>
<evidence type="ECO:0000312" key="7">
    <source>
        <dbReference type="EMBL" id="AAI19955.1"/>
    </source>
</evidence>
<reference evidence="7" key="1">
    <citation type="submission" date="2006-08" db="EMBL/GenBank/DDBJ databases">
        <authorList>
            <consortium name="NIH - Mammalian Gene Collection (MGC) project"/>
        </authorList>
    </citation>
    <scope>NUCLEOTIDE SEQUENCE [LARGE SCALE MRNA]</scope>
    <source>
        <strain evidence="7">Hereford</strain>
        <tissue evidence="7">Fetal skin</tissue>
    </source>
</reference>
<sequence>MSVRFSSASRRLGSCGGAGSVRLSGGGAGFGVGSTGSVPGFGSGFTCAFGGSSSAGSYSGGLGGGSASCTAFTGNEHGLLSGNEKVTMQNLNDRLASYLDNVRALEEANADLEQKIKGWYEKFGPGSCRGLDHDYSRYFTVIDDLRNQIISATTSNANIVLQNDNARLTADDFRLKFENEQALHQSVDADVSSLRRVLDELTLCRTDLEIQLETLSEELAYLKKNHEEEMKALQCAAGGNVNVEMNAAPGVDLTVLLNNMRAEYEALAEQNRRDAEAWFNEKSASLQQQISDDAGATTSARNELTEMKRNLQTLEIELQSLLATKHSLECSLTETEGNYCAQLAQIQAQIGALEEQLHQVRTETEGQKLEYEQLLDIKVHLEKEIETYCRLIDGEDGSCAKSKGYGGPGHQIKDPSKATVVKTIVEEIDPRGKVLSSRVHSVEEKSTKVNNVKSEQRVPS</sequence>
<proteinExistence type="evidence at transcript level"/>
<dbReference type="EMBL" id="BC119954">
    <property type="protein sequence ID" value="AAI19955.1"/>
    <property type="molecule type" value="mRNA"/>
</dbReference>
<dbReference type="RefSeq" id="NP_001069283.1">
    <property type="nucleotide sequence ID" value="NM_001075815.1"/>
</dbReference>
<dbReference type="SMR" id="Q0P5J6"/>
<dbReference type="FunCoup" id="Q0P5J6">
    <property type="interactions" value="132"/>
</dbReference>
<dbReference type="STRING" id="9913.ENSBTAP00000040718"/>
<dbReference type="PaxDb" id="9913-ENSBTAP00000040718"/>
<dbReference type="GeneID" id="521074"/>
<dbReference type="KEGG" id="bta:521074"/>
<dbReference type="CTD" id="342574"/>
<dbReference type="VEuPathDB" id="HostDB:ENSBTAG00000030548"/>
<dbReference type="eggNOG" id="ENOG502SIHJ">
    <property type="taxonomic scope" value="Eukaryota"/>
</dbReference>
<dbReference type="HOGENOM" id="CLU_012560_8_3_1"/>
<dbReference type="InParanoid" id="Q0P5J6"/>
<dbReference type="OMA" id="SRVHTME"/>
<dbReference type="OrthoDB" id="2441647at2759"/>
<dbReference type="TreeFam" id="TF332742"/>
<dbReference type="Reactome" id="R-BTA-6805567">
    <property type="pathway name" value="Keratinization"/>
</dbReference>
<dbReference type="Reactome" id="R-BTA-6809371">
    <property type="pathway name" value="Formation of the cornified envelope"/>
</dbReference>
<dbReference type="Proteomes" id="UP000009136">
    <property type="component" value="Chromosome 19"/>
</dbReference>
<dbReference type="Bgee" id="ENSBTAG00000030548">
    <property type="expression patterns" value="Expressed in zone of skin and 11 other cell types or tissues"/>
</dbReference>
<dbReference type="GO" id="GO:0005737">
    <property type="term" value="C:cytoplasm"/>
    <property type="evidence" value="ECO:0007669"/>
    <property type="project" value="UniProtKB-SubCell"/>
</dbReference>
<dbReference type="GO" id="GO:0005856">
    <property type="term" value="C:cytoskeleton"/>
    <property type="evidence" value="ECO:0000318"/>
    <property type="project" value="GO_Central"/>
</dbReference>
<dbReference type="GO" id="GO:0005882">
    <property type="term" value="C:intermediate filament"/>
    <property type="evidence" value="ECO:0007669"/>
    <property type="project" value="UniProtKB-KW"/>
</dbReference>
<dbReference type="GO" id="GO:0005198">
    <property type="term" value="F:structural molecule activity"/>
    <property type="evidence" value="ECO:0007669"/>
    <property type="project" value="InterPro"/>
</dbReference>
<dbReference type="GO" id="GO:0030855">
    <property type="term" value="P:epithelial cell differentiation"/>
    <property type="evidence" value="ECO:0000318"/>
    <property type="project" value="GO_Central"/>
</dbReference>
<dbReference type="GO" id="GO:0031069">
    <property type="term" value="P:hair follicle morphogenesis"/>
    <property type="evidence" value="ECO:0000318"/>
    <property type="project" value="GO_Central"/>
</dbReference>
<dbReference type="GO" id="GO:0045109">
    <property type="term" value="P:intermediate filament organization"/>
    <property type="evidence" value="ECO:0000318"/>
    <property type="project" value="GO_Central"/>
</dbReference>
<dbReference type="FunFam" id="1.20.5.1160:FF:000002">
    <property type="entry name" value="Type I keratin 10"/>
    <property type="match status" value="1"/>
</dbReference>
<dbReference type="FunFam" id="1.20.5.170:FF:000002">
    <property type="entry name" value="Type I keratin KA11"/>
    <property type="match status" value="1"/>
</dbReference>
<dbReference type="FunFam" id="1.20.5.500:FF:000001">
    <property type="entry name" value="Type II keratin 23"/>
    <property type="match status" value="1"/>
</dbReference>
<dbReference type="Gene3D" id="1.20.5.170">
    <property type="match status" value="1"/>
</dbReference>
<dbReference type="Gene3D" id="1.20.5.500">
    <property type="entry name" value="Single helix bin"/>
    <property type="match status" value="1"/>
</dbReference>
<dbReference type="Gene3D" id="1.20.5.1160">
    <property type="entry name" value="Vasodilator-stimulated phosphoprotein"/>
    <property type="match status" value="1"/>
</dbReference>
<dbReference type="InterPro" id="IPR039008">
    <property type="entry name" value="IF_rod_dom"/>
</dbReference>
<dbReference type="InterPro" id="IPR002957">
    <property type="entry name" value="Keratin_I"/>
</dbReference>
<dbReference type="PANTHER" id="PTHR23239">
    <property type="entry name" value="INTERMEDIATE FILAMENT"/>
    <property type="match status" value="1"/>
</dbReference>
<dbReference type="PANTHER" id="PTHR23239:SF120">
    <property type="entry name" value="KERATIN, TYPE I CYTOSKELETAL 27"/>
    <property type="match status" value="1"/>
</dbReference>
<dbReference type="Pfam" id="PF00038">
    <property type="entry name" value="Filament"/>
    <property type="match status" value="1"/>
</dbReference>
<dbReference type="PRINTS" id="PR01248">
    <property type="entry name" value="TYPE1KERATIN"/>
</dbReference>
<dbReference type="SMART" id="SM01391">
    <property type="entry name" value="Filament"/>
    <property type="match status" value="1"/>
</dbReference>
<dbReference type="SUPFAM" id="SSF64593">
    <property type="entry name" value="Intermediate filament protein, coiled coil region"/>
    <property type="match status" value="2"/>
</dbReference>
<dbReference type="PROSITE" id="PS51842">
    <property type="entry name" value="IF_ROD_2"/>
    <property type="match status" value="1"/>
</dbReference>
<protein>
    <recommendedName>
        <fullName>Keratin, type I cytoskeletal 27</fullName>
    </recommendedName>
    <alternativeName>
        <fullName>Cytokeratin-27</fullName>
        <shortName>CK-27</shortName>
    </alternativeName>
    <alternativeName>
        <fullName>Keratin-27</fullName>
        <shortName>K27</shortName>
    </alternativeName>
    <alternativeName>
        <fullName>Type I inner root sheath-specific keratin-K25irs3</fullName>
    </alternativeName>
</protein>
<name>K1C27_BOVIN</name>
<feature type="chain" id="PRO_0000312699" description="Keratin, type I cytoskeletal 27">
    <location>
        <begin position="1"/>
        <end position="460"/>
    </location>
</feature>
<feature type="domain" description="IF rod" evidence="4">
    <location>
        <begin position="84"/>
        <end position="399"/>
    </location>
</feature>
<feature type="region of interest" description="Head" evidence="3">
    <location>
        <begin position="1"/>
        <end position="83"/>
    </location>
</feature>
<feature type="region of interest" description="Coil 1A" evidence="3">
    <location>
        <begin position="84"/>
        <end position="119"/>
    </location>
</feature>
<feature type="region of interest" description="Linker 1" evidence="3">
    <location>
        <begin position="120"/>
        <end position="141"/>
    </location>
</feature>
<feature type="region of interest" description="Coil 1B" evidence="3">
    <location>
        <begin position="142"/>
        <end position="233"/>
    </location>
</feature>
<feature type="region of interest" description="Linker 12" evidence="3">
    <location>
        <begin position="234"/>
        <end position="256"/>
    </location>
</feature>
<feature type="region of interest" description="Coil 2" evidence="3">
    <location>
        <begin position="257"/>
        <end position="395"/>
    </location>
</feature>
<feature type="region of interest" description="Tail" evidence="3">
    <location>
        <begin position="396"/>
        <end position="460"/>
    </location>
</feature>
<feature type="region of interest" description="Disordered" evidence="5">
    <location>
        <begin position="435"/>
        <end position="460"/>
    </location>
</feature>
<feature type="compositionally biased region" description="Polar residues" evidence="5">
    <location>
        <begin position="448"/>
        <end position="460"/>
    </location>
</feature>